<gene>
    <name evidence="6" type="primary">swd2</name>
    <name evidence="4" type="synonym">swd2.1</name>
    <name type="ORF">SPBC18H10.06c</name>
</gene>
<reference evidence="6" key="1">
    <citation type="journal article" date="2002" name="Nature">
        <title>The genome sequence of Schizosaccharomyces pombe.</title>
        <authorList>
            <person name="Wood V."/>
            <person name="Gwilliam R."/>
            <person name="Rajandream M.A."/>
            <person name="Lyne M.H."/>
            <person name="Lyne R."/>
            <person name="Stewart A."/>
            <person name="Sgouros J.G."/>
            <person name="Peat N."/>
            <person name="Hayles J."/>
            <person name="Baker S.G."/>
            <person name="Basham D."/>
            <person name="Bowman S."/>
            <person name="Brooks K."/>
            <person name="Brown D."/>
            <person name="Brown S."/>
            <person name="Chillingworth T."/>
            <person name="Churcher C.M."/>
            <person name="Collins M."/>
            <person name="Connor R."/>
            <person name="Cronin A."/>
            <person name="Davis P."/>
            <person name="Feltwell T."/>
            <person name="Fraser A."/>
            <person name="Gentles S."/>
            <person name="Goble A."/>
            <person name="Hamlin N."/>
            <person name="Harris D.E."/>
            <person name="Hidalgo J."/>
            <person name="Hodgson G."/>
            <person name="Holroyd S."/>
            <person name="Hornsby T."/>
            <person name="Howarth S."/>
            <person name="Huckle E.J."/>
            <person name="Hunt S."/>
            <person name="Jagels K."/>
            <person name="James K.D."/>
            <person name="Jones L."/>
            <person name="Jones M."/>
            <person name="Leather S."/>
            <person name="McDonald S."/>
            <person name="McLean J."/>
            <person name="Mooney P."/>
            <person name="Moule S."/>
            <person name="Mungall K.L."/>
            <person name="Murphy L.D."/>
            <person name="Niblett D."/>
            <person name="Odell C."/>
            <person name="Oliver K."/>
            <person name="O'Neil S."/>
            <person name="Pearson D."/>
            <person name="Quail M.A."/>
            <person name="Rabbinowitsch E."/>
            <person name="Rutherford K.M."/>
            <person name="Rutter S."/>
            <person name="Saunders D."/>
            <person name="Seeger K."/>
            <person name="Sharp S."/>
            <person name="Skelton J."/>
            <person name="Simmonds M.N."/>
            <person name="Squares R."/>
            <person name="Squares S."/>
            <person name="Stevens K."/>
            <person name="Taylor K."/>
            <person name="Taylor R.G."/>
            <person name="Tivey A."/>
            <person name="Walsh S.V."/>
            <person name="Warren T."/>
            <person name="Whitehead S."/>
            <person name="Woodward J.R."/>
            <person name="Volckaert G."/>
            <person name="Aert R."/>
            <person name="Robben J."/>
            <person name="Grymonprez B."/>
            <person name="Weltjens I."/>
            <person name="Vanstreels E."/>
            <person name="Rieger M."/>
            <person name="Schaefer M."/>
            <person name="Mueller-Auer S."/>
            <person name="Gabel C."/>
            <person name="Fuchs M."/>
            <person name="Duesterhoeft A."/>
            <person name="Fritzc C."/>
            <person name="Holzer E."/>
            <person name="Moestl D."/>
            <person name="Hilbert H."/>
            <person name="Borzym K."/>
            <person name="Langer I."/>
            <person name="Beck A."/>
            <person name="Lehrach H."/>
            <person name="Reinhardt R."/>
            <person name="Pohl T.M."/>
            <person name="Eger P."/>
            <person name="Zimmermann W."/>
            <person name="Wedler H."/>
            <person name="Wambutt R."/>
            <person name="Purnelle B."/>
            <person name="Goffeau A."/>
            <person name="Cadieu E."/>
            <person name="Dreano S."/>
            <person name="Gloux S."/>
            <person name="Lelaure V."/>
            <person name="Mottier S."/>
            <person name="Galibert F."/>
            <person name="Aves S.J."/>
            <person name="Xiang Z."/>
            <person name="Hunt C."/>
            <person name="Moore K."/>
            <person name="Hurst S.M."/>
            <person name="Lucas M."/>
            <person name="Rochet M."/>
            <person name="Gaillardin C."/>
            <person name="Tallada V.A."/>
            <person name="Garzon A."/>
            <person name="Thode G."/>
            <person name="Daga R.R."/>
            <person name="Cruzado L."/>
            <person name="Jimenez J."/>
            <person name="Sanchez M."/>
            <person name="del Rey F."/>
            <person name="Benito J."/>
            <person name="Dominguez A."/>
            <person name="Revuelta J.L."/>
            <person name="Moreno S."/>
            <person name="Armstrong J."/>
            <person name="Forsburg S.L."/>
            <person name="Cerutti L."/>
            <person name="Lowe T."/>
            <person name="McCombie W.R."/>
            <person name="Paulsen I."/>
            <person name="Potashkin J."/>
            <person name="Shpakovski G.V."/>
            <person name="Ussery D."/>
            <person name="Barrell B.G."/>
            <person name="Nurse P."/>
        </authorList>
    </citation>
    <scope>NUCLEOTIDE SEQUENCE [LARGE SCALE GENOMIC DNA]</scope>
    <source>
        <strain>972 / ATCC 24843</strain>
    </source>
</reference>
<reference evidence="5" key="2">
    <citation type="journal article" date="2003" name="J. Biol. Chem.">
        <title>High conservation of the Set1/Rad6 axis of histone 3 lysine 4 methylation in budding and fission yeasts.</title>
        <authorList>
            <person name="Roguev A."/>
            <person name="Schaft D."/>
            <person name="Shevchenko A."/>
            <person name="Aasland R."/>
            <person name="Shevchenko A."/>
            <person name="Stewart A.F."/>
        </authorList>
    </citation>
    <scope>FUNCTION</scope>
    <scope>COMPOSITION OF THE SET1 COMPLEX</scope>
</reference>
<reference evidence="5" key="3">
    <citation type="journal article" date="2004" name="Mol. Cell. Proteomics">
        <title>A comparative analysis of an orthologous proteomic environment in the yeasts Saccharomyces cerevisiae and Schizosaccharomyces pombe.</title>
        <authorList>
            <person name="Roguev A."/>
            <person name="Shevchenko A."/>
            <person name="Schaft D."/>
            <person name="Thomas H."/>
            <person name="Stewart A.F."/>
            <person name="Shevchenko A."/>
        </authorList>
    </citation>
    <scope>COMPOSITION OF THE SET1 COMPLEX</scope>
</reference>
<protein>
    <recommendedName>
        <fullName>Set1 complex component swd2</fullName>
        <shortName>Set1C component swd2</shortName>
    </recommendedName>
    <alternativeName>
        <fullName>COMPASS component swd2</fullName>
    </alternativeName>
    <alternativeName>
        <fullName>Complex proteins associated with set1 protein swd2</fullName>
    </alternativeName>
</protein>
<sequence length="357" mass="39813">MTTVSITFDLLSSMQPRKWLKNQNFVGEITSLSFDDSGELCLASCTDDTLQLYNCISGKFVKSLASKKYGAHLGRFTHHSNSLIHASTKEDNTVRYLDVVTNRYLRYFPGHKQTVTSIDVSPADETFLSASLDNTIRLWDLRSPNCQGLLNVSSPVVAAFDATGLIFASVSERKYKISLYNIKSFDARPFQDIPLTFLPPHVRIANVEFSTDGKYLLLTTGNDFHYVIDAYSGSELLRVPSKVSTKTQDGNLTYYASACMSPDSKFLFTSYDNEHLCMYQLPELKQTVNSDHIVNSFTEMGLASTTPTSNSHSTENPLAIIPSSTSKNLLPETPSIVRFNPRFSQLVTAHSGVIFWT</sequence>
<dbReference type="EMBL" id="CU329671">
    <property type="protein sequence ID" value="CAA18403.1"/>
    <property type="molecule type" value="Genomic_DNA"/>
</dbReference>
<dbReference type="PIR" id="T39770">
    <property type="entry name" value="T39770"/>
</dbReference>
<dbReference type="RefSeq" id="NP_595730.1">
    <property type="nucleotide sequence ID" value="NM_001021628.2"/>
</dbReference>
<dbReference type="SMR" id="O60137"/>
<dbReference type="BioGRID" id="277307">
    <property type="interactions" value="179"/>
</dbReference>
<dbReference type="ComplexPortal" id="CPX-10325">
    <property type="entry name" value="COMPASS complex"/>
</dbReference>
<dbReference type="FunCoup" id="O60137">
    <property type="interactions" value="701"/>
</dbReference>
<dbReference type="STRING" id="284812.O60137"/>
<dbReference type="iPTMnet" id="O60137"/>
<dbReference type="PaxDb" id="4896-SPBC18H10.06c.1"/>
<dbReference type="EnsemblFungi" id="SPBC18H10.06c.1">
    <property type="protein sequence ID" value="SPBC18H10.06c.1:pep"/>
    <property type="gene ID" value="SPBC18H10.06c"/>
</dbReference>
<dbReference type="GeneID" id="2540788"/>
<dbReference type="KEGG" id="spo:2540788"/>
<dbReference type="PomBase" id="SPBC18H10.06c">
    <property type="gene designation" value="swd2"/>
</dbReference>
<dbReference type="VEuPathDB" id="FungiDB:SPBC18H10.06c"/>
<dbReference type="eggNOG" id="KOG1446">
    <property type="taxonomic scope" value="Eukaryota"/>
</dbReference>
<dbReference type="HOGENOM" id="CLU_044117_3_0_1"/>
<dbReference type="InParanoid" id="O60137"/>
<dbReference type="OMA" id="EISMATI"/>
<dbReference type="PhylomeDB" id="O60137"/>
<dbReference type="Reactome" id="R-SPO-9772755">
    <property type="pathway name" value="Formation of WDR5-containing histone-modifying complexes"/>
</dbReference>
<dbReference type="PRO" id="PR:O60137"/>
<dbReference type="Proteomes" id="UP000002485">
    <property type="component" value="Chromosome II"/>
</dbReference>
<dbReference type="GO" id="GO:0000785">
    <property type="term" value="C:chromatin"/>
    <property type="evidence" value="ECO:0000305"/>
    <property type="project" value="PomBase"/>
</dbReference>
<dbReference type="GO" id="GO:0005829">
    <property type="term" value="C:cytosol"/>
    <property type="evidence" value="ECO:0007005"/>
    <property type="project" value="PomBase"/>
</dbReference>
<dbReference type="GO" id="GO:0048188">
    <property type="term" value="C:Set1C/COMPASS complex"/>
    <property type="evidence" value="ECO:0000314"/>
    <property type="project" value="PomBase"/>
</dbReference>
<dbReference type="GO" id="GO:0003682">
    <property type="term" value="F:chromatin binding"/>
    <property type="evidence" value="ECO:0000318"/>
    <property type="project" value="GO_Central"/>
</dbReference>
<dbReference type="GO" id="GO:0045815">
    <property type="term" value="P:transcription initiation-coupled chromatin remodeling"/>
    <property type="evidence" value="ECO:0000305"/>
    <property type="project" value="PomBase"/>
</dbReference>
<dbReference type="Gene3D" id="2.130.10.10">
    <property type="entry name" value="YVTN repeat-like/Quinoprotein amine dehydrogenase"/>
    <property type="match status" value="1"/>
</dbReference>
<dbReference type="InterPro" id="IPR037867">
    <property type="entry name" value="Swd2/WDR82"/>
</dbReference>
<dbReference type="InterPro" id="IPR015943">
    <property type="entry name" value="WD40/YVTN_repeat-like_dom_sf"/>
</dbReference>
<dbReference type="InterPro" id="IPR036322">
    <property type="entry name" value="WD40_repeat_dom_sf"/>
</dbReference>
<dbReference type="InterPro" id="IPR001680">
    <property type="entry name" value="WD40_rpt"/>
</dbReference>
<dbReference type="PANTHER" id="PTHR19861:SF0">
    <property type="entry name" value="WD REPEAT-CONTAINING PROTEIN 82"/>
    <property type="match status" value="1"/>
</dbReference>
<dbReference type="PANTHER" id="PTHR19861">
    <property type="entry name" value="WD40 REPEAT PROTEIN SWD2"/>
    <property type="match status" value="1"/>
</dbReference>
<dbReference type="Pfam" id="PF00400">
    <property type="entry name" value="WD40"/>
    <property type="match status" value="2"/>
</dbReference>
<dbReference type="SMART" id="SM00320">
    <property type="entry name" value="WD40"/>
    <property type="match status" value="3"/>
</dbReference>
<dbReference type="SUPFAM" id="SSF50978">
    <property type="entry name" value="WD40 repeat-like"/>
    <property type="match status" value="1"/>
</dbReference>
<dbReference type="PROSITE" id="PS50082">
    <property type="entry name" value="WD_REPEATS_2"/>
    <property type="match status" value="1"/>
</dbReference>
<dbReference type="PROSITE" id="PS50294">
    <property type="entry name" value="WD_REPEATS_REGION"/>
    <property type="match status" value="1"/>
</dbReference>
<comment type="function">
    <text evidence="2">The Set1 complex specifically methylates 'Lys-4' of histone H3.</text>
</comment>
<comment type="subunit">
    <text evidence="2 3">Component of the Set1 complex composed of ash2, sdc1, set1, shg1, spp1, swd1, swd2 and swd3.</text>
</comment>
<comment type="subcellular location">
    <subcellularLocation>
        <location evidence="5">Nucleus</location>
    </subcellularLocation>
</comment>
<comment type="similarity">
    <text evidence="5">Belongs to the WD repeat SWD2 family.</text>
</comment>
<name>SWD2_SCHPO</name>
<proteinExistence type="inferred from homology"/>
<feature type="chain" id="PRO_0000051252" description="Set1 complex component swd2">
    <location>
        <begin position="1"/>
        <end position="357"/>
    </location>
</feature>
<feature type="repeat" description="WD 1" evidence="1">
    <location>
        <begin position="24"/>
        <end position="65"/>
    </location>
</feature>
<feature type="repeat" description="WD 2" evidence="1">
    <location>
        <begin position="110"/>
        <end position="149"/>
    </location>
</feature>
<feature type="repeat" description="WD 3" evidence="1">
    <location>
        <begin position="199"/>
        <end position="241"/>
    </location>
</feature>
<feature type="repeat" description="WD 4" evidence="1">
    <location>
        <begin position="247"/>
        <end position="289"/>
    </location>
</feature>
<evidence type="ECO:0000255" key="1"/>
<evidence type="ECO:0000269" key="2">
    <source>
    </source>
</evidence>
<evidence type="ECO:0000269" key="3">
    <source>
    </source>
</evidence>
<evidence type="ECO:0000303" key="4">
    <source>
    </source>
</evidence>
<evidence type="ECO:0000305" key="5"/>
<evidence type="ECO:0000312" key="6">
    <source>
        <dbReference type="EMBL" id="CAA18403.1"/>
    </source>
</evidence>
<accession>O60137</accession>
<keyword id="KW-0539">Nucleus</keyword>
<keyword id="KW-1185">Reference proteome</keyword>
<keyword id="KW-0677">Repeat</keyword>
<keyword id="KW-0853">WD repeat</keyword>
<organism>
    <name type="scientific">Schizosaccharomyces pombe (strain 972 / ATCC 24843)</name>
    <name type="common">Fission yeast</name>
    <dbReference type="NCBI Taxonomy" id="284812"/>
    <lineage>
        <taxon>Eukaryota</taxon>
        <taxon>Fungi</taxon>
        <taxon>Dikarya</taxon>
        <taxon>Ascomycota</taxon>
        <taxon>Taphrinomycotina</taxon>
        <taxon>Schizosaccharomycetes</taxon>
        <taxon>Schizosaccharomycetales</taxon>
        <taxon>Schizosaccharomycetaceae</taxon>
        <taxon>Schizosaccharomyces</taxon>
    </lineage>
</organism>